<gene>
    <name type="primary">acyP</name>
    <name type="ordered locus">AAur_1119</name>
</gene>
<sequence>MTDETLRLTARITGVVQGVGFRYWTARKADELLLKGTVRNSADGSVELVAEGSAADVDSIVKWLHSSRAPGRVENVDFQVSDATGEFDDFRIID</sequence>
<proteinExistence type="inferred from homology"/>
<accession>A1R3U5</accession>
<evidence type="ECO:0000255" key="1">
    <source>
        <dbReference type="PROSITE-ProRule" id="PRU00520"/>
    </source>
</evidence>
<evidence type="ECO:0000305" key="2"/>
<reference key="1">
    <citation type="journal article" date="2006" name="PLoS Genet.">
        <title>Secrets of soil survival revealed by the genome sequence of Arthrobacter aurescens TC1.</title>
        <authorList>
            <person name="Mongodin E.F."/>
            <person name="Shapir N."/>
            <person name="Daugherty S.C."/>
            <person name="DeBoy R.T."/>
            <person name="Emerson J.B."/>
            <person name="Shvartzbeyn A."/>
            <person name="Radune D."/>
            <person name="Vamathevan J."/>
            <person name="Riggs F."/>
            <person name="Grinberg V."/>
            <person name="Khouri H.M."/>
            <person name="Wackett L.P."/>
            <person name="Nelson K.E."/>
            <person name="Sadowsky M.J."/>
        </authorList>
    </citation>
    <scope>NUCLEOTIDE SEQUENCE [LARGE SCALE GENOMIC DNA]</scope>
    <source>
        <strain>TC1</strain>
    </source>
</reference>
<name>ACYP_PAEAT</name>
<comment type="catalytic activity">
    <reaction>
        <text>an acyl phosphate + H2O = a carboxylate + phosphate + H(+)</text>
        <dbReference type="Rhea" id="RHEA:14965"/>
        <dbReference type="ChEBI" id="CHEBI:15377"/>
        <dbReference type="ChEBI" id="CHEBI:15378"/>
        <dbReference type="ChEBI" id="CHEBI:29067"/>
        <dbReference type="ChEBI" id="CHEBI:43474"/>
        <dbReference type="ChEBI" id="CHEBI:59918"/>
        <dbReference type="EC" id="3.6.1.7"/>
    </reaction>
</comment>
<comment type="similarity">
    <text evidence="2">Belongs to the acylphosphatase family.</text>
</comment>
<dbReference type="EC" id="3.6.1.7"/>
<dbReference type="EMBL" id="CP000474">
    <property type="protein sequence ID" value="ABM06569.1"/>
    <property type="molecule type" value="Genomic_DNA"/>
</dbReference>
<dbReference type="RefSeq" id="WP_011773854.1">
    <property type="nucleotide sequence ID" value="NC_008711.1"/>
</dbReference>
<dbReference type="SMR" id="A1R3U5"/>
<dbReference type="STRING" id="290340.AAur_1119"/>
<dbReference type="KEGG" id="aau:AAur_1119"/>
<dbReference type="eggNOG" id="COG1254">
    <property type="taxonomic scope" value="Bacteria"/>
</dbReference>
<dbReference type="HOGENOM" id="CLU_141932_2_1_11"/>
<dbReference type="OrthoDB" id="3182027at2"/>
<dbReference type="Proteomes" id="UP000000637">
    <property type="component" value="Chromosome"/>
</dbReference>
<dbReference type="GO" id="GO:0003998">
    <property type="term" value="F:acylphosphatase activity"/>
    <property type="evidence" value="ECO:0007669"/>
    <property type="project" value="UniProtKB-EC"/>
</dbReference>
<dbReference type="Gene3D" id="3.30.70.100">
    <property type="match status" value="1"/>
</dbReference>
<dbReference type="InterPro" id="IPR020456">
    <property type="entry name" value="Acylphosphatase"/>
</dbReference>
<dbReference type="InterPro" id="IPR001792">
    <property type="entry name" value="Acylphosphatase-like_dom"/>
</dbReference>
<dbReference type="InterPro" id="IPR036046">
    <property type="entry name" value="Acylphosphatase-like_dom_sf"/>
</dbReference>
<dbReference type="InterPro" id="IPR017968">
    <property type="entry name" value="Acylphosphatase_CS"/>
</dbReference>
<dbReference type="NCBIfam" id="NF011001">
    <property type="entry name" value="PRK14427.1"/>
    <property type="match status" value="1"/>
</dbReference>
<dbReference type="PANTHER" id="PTHR47268">
    <property type="entry name" value="ACYLPHOSPHATASE"/>
    <property type="match status" value="1"/>
</dbReference>
<dbReference type="PANTHER" id="PTHR47268:SF4">
    <property type="entry name" value="ACYLPHOSPHATASE"/>
    <property type="match status" value="1"/>
</dbReference>
<dbReference type="Pfam" id="PF00708">
    <property type="entry name" value="Acylphosphatase"/>
    <property type="match status" value="1"/>
</dbReference>
<dbReference type="SUPFAM" id="SSF54975">
    <property type="entry name" value="Acylphosphatase/BLUF domain-like"/>
    <property type="match status" value="1"/>
</dbReference>
<dbReference type="PROSITE" id="PS00150">
    <property type="entry name" value="ACYLPHOSPHATASE_1"/>
    <property type="match status" value="1"/>
</dbReference>
<dbReference type="PROSITE" id="PS51160">
    <property type="entry name" value="ACYLPHOSPHATASE_3"/>
    <property type="match status" value="1"/>
</dbReference>
<keyword id="KW-0378">Hydrolase</keyword>
<feature type="chain" id="PRO_0000326652" description="Acylphosphatase">
    <location>
        <begin position="1"/>
        <end position="94"/>
    </location>
</feature>
<feature type="domain" description="Acylphosphatase-like" evidence="1">
    <location>
        <begin position="7"/>
        <end position="94"/>
    </location>
</feature>
<feature type="active site" evidence="1">
    <location>
        <position position="22"/>
    </location>
</feature>
<feature type="active site" evidence="1">
    <location>
        <position position="40"/>
    </location>
</feature>
<organism>
    <name type="scientific">Paenarthrobacter aurescens (strain TC1)</name>
    <dbReference type="NCBI Taxonomy" id="290340"/>
    <lineage>
        <taxon>Bacteria</taxon>
        <taxon>Bacillati</taxon>
        <taxon>Actinomycetota</taxon>
        <taxon>Actinomycetes</taxon>
        <taxon>Micrococcales</taxon>
        <taxon>Micrococcaceae</taxon>
        <taxon>Paenarthrobacter</taxon>
    </lineage>
</organism>
<protein>
    <recommendedName>
        <fullName>Acylphosphatase</fullName>
        <ecNumber>3.6.1.7</ecNumber>
    </recommendedName>
    <alternativeName>
        <fullName>Acylphosphate phosphohydrolase</fullName>
    </alternativeName>
</protein>